<name>Y2023_SODGM</name>
<proteinExistence type="inferred from homology"/>
<organism>
    <name type="scientific">Sodalis glossinidius (strain morsitans)</name>
    <dbReference type="NCBI Taxonomy" id="343509"/>
    <lineage>
        <taxon>Bacteria</taxon>
        <taxon>Pseudomonadati</taxon>
        <taxon>Pseudomonadota</taxon>
        <taxon>Gammaproteobacteria</taxon>
        <taxon>Enterobacterales</taxon>
        <taxon>Bruguierivoracaceae</taxon>
        <taxon>Sodalis</taxon>
    </lineage>
</organism>
<protein>
    <recommendedName>
        <fullName evidence="1">UPF0301 protein SG2023</fullName>
    </recommendedName>
</protein>
<feature type="chain" id="PRO_0000258885" description="UPF0301 protein SG2023">
    <location>
        <begin position="1"/>
        <end position="187"/>
    </location>
</feature>
<comment type="similarity">
    <text evidence="1">Belongs to the UPF0301 (AlgH) family.</text>
</comment>
<dbReference type="EMBL" id="AP008232">
    <property type="protein sequence ID" value="BAE75298.1"/>
    <property type="molecule type" value="Genomic_DNA"/>
</dbReference>
<dbReference type="RefSeq" id="WP_011411753.1">
    <property type="nucleotide sequence ID" value="NC_007712.1"/>
</dbReference>
<dbReference type="SMR" id="Q2NRC7"/>
<dbReference type="STRING" id="343509.SG2023"/>
<dbReference type="KEGG" id="sgl:SG2023"/>
<dbReference type="eggNOG" id="COG1678">
    <property type="taxonomic scope" value="Bacteria"/>
</dbReference>
<dbReference type="HOGENOM" id="CLU_057596_1_0_6"/>
<dbReference type="OrthoDB" id="9807486at2"/>
<dbReference type="Proteomes" id="UP000001932">
    <property type="component" value="Chromosome"/>
</dbReference>
<dbReference type="GO" id="GO:0005829">
    <property type="term" value="C:cytosol"/>
    <property type="evidence" value="ECO:0007669"/>
    <property type="project" value="TreeGrafter"/>
</dbReference>
<dbReference type="Gene3D" id="3.40.1740.10">
    <property type="entry name" value="VC0467-like"/>
    <property type="match status" value="1"/>
</dbReference>
<dbReference type="HAMAP" id="MF_00758">
    <property type="entry name" value="UPF0301"/>
    <property type="match status" value="1"/>
</dbReference>
<dbReference type="InterPro" id="IPR003774">
    <property type="entry name" value="AlgH-like"/>
</dbReference>
<dbReference type="NCBIfam" id="NF001266">
    <property type="entry name" value="PRK00228.1-1"/>
    <property type="match status" value="1"/>
</dbReference>
<dbReference type="PANTHER" id="PTHR30327">
    <property type="entry name" value="UNCHARACTERIZED PROTEIN YQGE"/>
    <property type="match status" value="1"/>
</dbReference>
<dbReference type="PANTHER" id="PTHR30327:SF1">
    <property type="entry name" value="UPF0301 PROTEIN YQGE"/>
    <property type="match status" value="1"/>
</dbReference>
<dbReference type="Pfam" id="PF02622">
    <property type="entry name" value="DUF179"/>
    <property type="match status" value="1"/>
</dbReference>
<dbReference type="SUPFAM" id="SSF143456">
    <property type="entry name" value="VC0467-like"/>
    <property type="match status" value="1"/>
</dbReference>
<reference key="1">
    <citation type="journal article" date="2006" name="Genome Res.">
        <title>Massive genome erosion and functional adaptations provide insights into the symbiotic lifestyle of Sodalis glossinidius in the tsetse host.</title>
        <authorList>
            <person name="Toh H."/>
            <person name="Weiss B.L."/>
            <person name="Perkin S.A.H."/>
            <person name="Yamashita A."/>
            <person name="Oshima K."/>
            <person name="Hattori M."/>
            <person name="Aksoy S."/>
        </authorList>
    </citation>
    <scope>NUCLEOTIDE SEQUENCE [LARGE SCALE GENOMIC DNA]</scope>
    <source>
        <strain>morsitans</strain>
    </source>
</reference>
<gene>
    <name type="ordered locus">SG2023</name>
</gene>
<accession>Q2NRC7</accession>
<sequence>MNLQHHFLIAMPSLQDPLFKRSVVYICEHNSDGAMGIVINKPVEQFTVENVLHKLKIMPADRDPAIRLDKPVFAGGPLADDRGFILHTPRDGFGSSIGISPQTMITTSKDVLETLGTADQPDDVLVALGYSGWEQGKLERELMENAWLTTPADSEILFHTPIASRWREAAKTLGIDIHNIANQAGHA</sequence>
<evidence type="ECO:0000255" key="1">
    <source>
        <dbReference type="HAMAP-Rule" id="MF_00758"/>
    </source>
</evidence>